<keyword id="KW-0614">Plasmid</keyword>
<keyword id="KW-1185">Reference proteome</keyword>
<protein>
    <recommendedName>
        <fullName>Uncharacterized protein y4oW</fullName>
    </recommendedName>
</protein>
<geneLocation type="plasmid">
    <name>sym pNGR234a</name>
</geneLocation>
<name>Y4OW_SINFN</name>
<feature type="chain" id="PRO_0000200932" description="Uncharacterized protein y4oW">
    <location>
        <begin position="1"/>
        <end position="216"/>
    </location>
</feature>
<feature type="domain" description="Cupin type-2" evidence="1">
    <location>
        <begin position="125"/>
        <end position="176"/>
    </location>
</feature>
<proteinExistence type="predicted"/>
<gene>
    <name type="ordered locus">NGR_a02130</name>
    <name type="ORF">y4oW</name>
</gene>
<reference key="1">
    <citation type="journal article" date="1997" name="Nature">
        <title>Molecular basis of symbiosis between Rhizobium and legumes.</title>
        <authorList>
            <person name="Freiberg C.A."/>
            <person name="Fellay R."/>
            <person name="Bairoch A."/>
            <person name="Broughton W.J."/>
            <person name="Rosenthal A."/>
            <person name="Perret X."/>
        </authorList>
    </citation>
    <scope>NUCLEOTIDE SEQUENCE [LARGE SCALE GENOMIC DNA]</scope>
    <source>
        <strain>NBRC 101917 / NGR234</strain>
    </source>
</reference>
<reference key="2">
    <citation type="journal article" date="2009" name="Appl. Environ. Microbiol.">
        <title>Rhizobium sp. strain NGR234 possesses a remarkable number of secretion systems.</title>
        <authorList>
            <person name="Schmeisser C."/>
            <person name="Liesegang H."/>
            <person name="Krysciak D."/>
            <person name="Bakkou N."/>
            <person name="Le Quere A."/>
            <person name="Wollherr A."/>
            <person name="Heinemeyer I."/>
            <person name="Morgenstern B."/>
            <person name="Pommerening-Roeser A."/>
            <person name="Flores M."/>
            <person name="Palacios R."/>
            <person name="Brenner S."/>
            <person name="Gottschalk G."/>
            <person name="Schmitz R.A."/>
            <person name="Broughton W.J."/>
            <person name="Perret X."/>
            <person name="Strittmatter A.W."/>
            <person name="Streit W.R."/>
        </authorList>
    </citation>
    <scope>NUCLEOTIDE SEQUENCE [LARGE SCALE GENOMIC DNA]</scope>
    <source>
        <strain>NBRC 101917 / NGR234</strain>
    </source>
</reference>
<sequence length="216" mass="23716">MRRESKQMTIFRSGDQPPGWCELTDFEFVDLTDQPLPIPLAAEKQRLLVTSGSCCVRSAEGAQVLSEGQFLDMDGANGPFTADAGEGAAQVLVFYGRWGNELGGCGVFKLGPDTPVPVRGDPVNYPKSTNFDSHYHDCDEYWVIIEGAGTVVVGSRSFEVEVGDCVAIGMGHHHDLSEVWSDVKGAYFETTLEGRKRFGHLWEHTHGPADVRPERV</sequence>
<evidence type="ECO:0000255" key="1"/>
<accession>P55608</accession>
<organism>
    <name type="scientific">Sinorhizobium fredii (strain NBRC 101917 / NGR234)</name>
    <dbReference type="NCBI Taxonomy" id="394"/>
    <lineage>
        <taxon>Bacteria</taxon>
        <taxon>Pseudomonadati</taxon>
        <taxon>Pseudomonadota</taxon>
        <taxon>Alphaproteobacteria</taxon>
        <taxon>Hyphomicrobiales</taxon>
        <taxon>Rhizobiaceae</taxon>
        <taxon>Sinorhizobium/Ensifer group</taxon>
        <taxon>Sinorhizobium</taxon>
    </lineage>
</organism>
<dbReference type="EMBL" id="U00090">
    <property type="protein sequence ID" value="AAB91809.1"/>
    <property type="molecule type" value="Genomic_DNA"/>
</dbReference>
<dbReference type="RefSeq" id="NP_444012.1">
    <property type="nucleotide sequence ID" value="NC_000914.2"/>
</dbReference>
<dbReference type="SMR" id="P55608"/>
<dbReference type="KEGG" id="rhi:NGR_a02130"/>
<dbReference type="PATRIC" id="fig|394.7.peg.224"/>
<dbReference type="eggNOG" id="COG0662">
    <property type="taxonomic scope" value="Bacteria"/>
</dbReference>
<dbReference type="HOGENOM" id="CLU_1276762_0_0_5"/>
<dbReference type="OrthoDB" id="9814553at2"/>
<dbReference type="Proteomes" id="UP000001054">
    <property type="component" value="Plasmid pNGR234a"/>
</dbReference>
<dbReference type="Gene3D" id="2.60.120.10">
    <property type="entry name" value="Jelly Rolls"/>
    <property type="match status" value="1"/>
</dbReference>
<dbReference type="InterPro" id="IPR013096">
    <property type="entry name" value="Cupin_2"/>
</dbReference>
<dbReference type="InterPro" id="IPR014710">
    <property type="entry name" value="RmlC-like_jellyroll"/>
</dbReference>
<dbReference type="InterPro" id="IPR011051">
    <property type="entry name" value="RmlC_Cupin_sf"/>
</dbReference>
<dbReference type="Pfam" id="PF07883">
    <property type="entry name" value="Cupin_2"/>
    <property type="match status" value="1"/>
</dbReference>
<dbReference type="SUPFAM" id="SSF51182">
    <property type="entry name" value="RmlC-like cupins"/>
    <property type="match status" value="1"/>
</dbReference>